<evidence type="ECO:0000255" key="1">
    <source>
        <dbReference type="HAMAP-Rule" id="MF_00110"/>
    </source>
</evidence>
<dbReference type="EC" id="4.2.3.4" evidence="1"/>
<dbReference type="EMBL" id="CP000524">
    <property type="protein sequence ID" value="ABM44620.1"/>
    <property type="molecule type" value="Genomic_DNA"/>
</dbReference>
<dbReference type="RefSeq" id="WP_005765745.1">
    <property type="nucleotide sequence ID" value="NC_008783.1"/>
</dbReference>
<dbReference type="SMR" id="A1UQX3"/>
<dbReference type="STRING" id="360095.BARBAKC583_0037"/>
<dbReference type="GeneID" id="4684718"/>
<dbReference type="KEGG" id="bbk:BARBAKC583_0037"/>
<dbReference type="PATRIC" id="fig|360095.6.peg.37"/>
<dbReference type="eggNOG" id="COG0337">
    <property type="taxonomic scope" value="Bacteria"/>
</dbReference>
<dbReference type="HOGENOM" id="CLU_001201_0_2_5"/>
<dbReference type="OrthoDB" id="9806583at2"/>
<dbReference type="UniPathway" id="UPA00053">
    <property type="reaction ID" value="UER00085"/>
</dbReference>
<dbReference type="Proteomes" id="UP000000643">
    <property type="component" value="Chromosome"/>
</dbReference>
<dbReference type="GO" id="GO:0005737">
    <property type="term" value="C:cytoplasm"/>
    <property type="evidence" value="ECO:0007669"/>
    <property type="project" value="UniProtKB-SubCell"/>
</dbReference>
<dbReference type="GO" id="GO:0003856">
    <property type="term" value="F:3-dehydroquinate synthase activity"/>
    <property type="evidence" value="ECO:0007669"/>
    <property type="project" value="UniProtKB-UniRule"/>
</dbReference>
<dbReference type="GO" id="GO:0046872">
    <property type="term" value="F:metal ion binding"/>
    <property type="evidence" value="ECO:0007669"/>
    <property type="project" value="UniProtKB-KW"/>
</dbReference>
<dbReference type="GO" id="GO:0000166">
    <property type="term" value="F:nucleotide binding"/>
    <property type="evidence" value="ECO:0007669"/>
    <property type="project" value="UniProtKB-KW"/>
</dbReference>
<dbReference type="GO" id="GO:0008652">
    <property type="term" value="P:amino acid biosynthetic process"/>
    <property type="evidence" value="ECO:0007669"/>
    <property type="project" value="UniProtKB-KW"/>
</dbReference>
<dbReference type="GO" id="GO:0009073">
    <property type="term" value="P:aromatic amino acid family biosynthetic process"/>
    <property type="evidence" value="ECO:0007669"/>
    <property type="project" value="UniProtKB-KW"/>
</dbReference>
<dbReference type="GO" id="GO:0009423">
    <property type="term" value="P:chorismate biosynthetic process"/>
    <property type="evidence" value="ECO:0007669"/>
    <property type="project" value="UniProtKB-UniRule"/>
</dbReference>
<dbReference type="CDD" id="cd08195">
    <property type="entry name" value="DHQS"/>
    <property type="match status" value="1"/>
</dbReference>
<dbReference type="FunFam" id="3.40.50.1970:FF:000007">
    <property type="entry name" value="Pentafunctional AROM polypeptide"/>
    <property type="match status" value="1"/>
</dbReference>
<dbReference type="Gene3D" id="3.40.50.1970">
    <property type="match status" value="1"/>
</dbReference>
<dbReference type="Gene3D" id="1.20.1090.10">
    <property type="entry name" value="Dehydroquinate synthase-like - alpha domain"/>
    <property type="match status" value="1"/>
</dbReference>
<dbReference type="HAMAP" id="MF_00110">
    <property type="entry name" value="DHQ_synthase"/>
    <property type="match status" value="1"/>
</dbReference>
<dbReference type="InterPro" id="IPR050071">
    <property type="entry name" value="Dehydroquinate_synthase"/>
</dbReference>
<dbReference type="InterPro" id="IPR016037">
    <property type="entry name" value="DHQ_synth_AroB"/>
</dbReference>
<dbReference type="InterPro" id="IPR030963">
    <property type="entry name" value="DHQ_synth_fam"/>
</dbReference>
<dbReference type="InterPro" id="IPR030960">
    <property type="entry name" value="DHQS/DOIS_N"/>
</dbReference>
<dbReference type="InterPro" id="IPR056179">
    <property type="entry name" value="DHQS_C"/>
</dbReference>
<dbReference type="NCBIfam" id="TIGR01357">
    <property type="entry name" value="aroB"/>
    <property type="match status" value="1"/>
</dbReference>
<dbReference type="PANTHER" id="PTHR43622">
    <property type="entry name" value="3-DEHYDROQUINATE SYNTHASE"/>
    <property type="match status" value="1"/>
</dbReference>
<dbReference type="PANTHER" id="PTHR43622:SF7">
    <property type="entry name" value="3-DEHYDROQUINATE SYNTHASE, CHLOROPLASTIC"/>
    <property type="match status" value="1"/>
</dbReference>
<dbReference type="Pfam" id="PF01761">
    <property type="entry name" value="DHQ_synthase"/>
    <property type="match status" value="1"/>
</dbReference>
<dbReference type="Pfam" id="PF24621">
    <property type="entry name" value="DHQS_C"/>
    <property type="match status" value="1"/>
</dbReference>
<dbReference type="PIRSF" id="PIRSF001455">
    <property type="entry name" value="DHQ_synth"/>
    <property type="match status" value="1"/>
</dbReference>
<dbReference type="SUPFAM" id="SSF56796">
    <property type="entry name" value="Dehydroquinate synthase-like"/>
    <property type="match status" value="1"/>
</dbReference>
<organism>
    <name type="scientific">Bartonella bacilliformis (strain ATCC 35685 / KC583 / Herrer 020/F12,63)</name>
    <dbReference type="NCBI Taxonomy" id="360095"/>
    <lineage>
        <taxon>Bacteria</taxon>
        <taxon>Pseudomonadati</taxon>
        <taxon>Pseudomonadota</taxon>
        <taxon>Alphaproteobacteria</taxon>
        <taxon>Hyphomicrobiales</taxon>
        <taxon>Bartonellaceae</taxon>
        <taxon>Bartonella</taxon>
    </lineage>
</organism>
<name>AROB_BARBK</name>
<gene>
    <name evidence="1" type="primary">aroB</name>
    <name type="ordered locus">BARBAKC583_0037</name>
</gene>
<sequence length="377" mass="41367">MKAKTITVKLDKCCYDIIIGSDLIAQAALQIKSFFHQKGPHQKRLAIVTDTNVAALHLETLQAGLSANQIHTIPIIVEAGEQSKSFPVLQTIIDKILAARLERGDSIIAFGGGVIGDLGGFAASIIRRGMHFIQMPTTLLAQIDSSIGGKTGINSQYGKNLIGSFYQPQCVITDTCVLDTLPLREFRAGYAEMVKYGLINQPHFFEWLEKNQKEIFSSGPTRVEAIARSCQFKADIVARDEYEAGERALLNLGHTFGHMLETATAYNANRLIHGEAVAIGMILAYQFSAQLNLISPMLVQRVETHLKAAGLPTQLQDIPGELPNAEMLMTFIAQDKKVSNNRLTFILTHGLGQSFIAKDVASDAVLTFLKQKFTKTH</sequence>
<comment type="function">
    <text evidence="1">Catalyzes the conversion of 3-deoxy-D-arabino-heptulosonate 7-phosphate (DAHP) to dehydroquinate (DHQ).</text>
</comment>
<comment type="catalytic activity">
    <reaction evidence="1">
        <text>7-phospho-2-dehydro-3-deoxy-D-arabino-heptonate = 3-dehydroquinate + phosphate</text>
        <dbReference type="Rhea" id="RHEA:21968"/>
        <dbReference type="ChEBI" id="CHEBI:32364"/>
        <dbReference type="ChEBI" id="CHEBI:43474"/>
        <dbReference type="ChEBI" id="CHEBI:58394"/>
        <dbReference type="EC" id="4.2.3.4"/>
    </reaction>
</comment>
<comment type="cofactor">
    <cofactor evidence="1">
        <name>Co(2+)</name>
        <dbReference type="ChEBI" id="CHEBI:48828"/>
    </cofactor>
    <cofactor evidence="1">
        <name>Zn(2+)</name>
        <dbReference type="ChEBI" id="CHEBI:29105"/>
    </cofactor>
    <text evidence="1">Binds 1 divalent metal cation per subunit. Can use either Co(2+) or Zn(2+).</text>
</comment>
<comment type="cofactor">
    <cofactor evidence="1">
        <name>NAD(+)</name>
        <dbReference type="ChEBI" id="CHEBI:57540"/>
    </cofactor>
</comment>
<comment type="pathway">
    <text evidence="1">Metabolic intermediate biosynthesis; chorismate biosynthesis; chorismate from D-erythrose 4-phosphate and phosphoenolpyruvate: step 2/7.</text>
</comment>
<comment type="subcellular location">
    <subcellularLocation>
        <location evidence="1">Cytoplasm</location>
    </subcellularLocation>
</comment>
<comment type="similarity">
    <text evidence="1">Belongs to the sugar phosphate cyclases superfamily. Dehydroquinate synthase family.</text>
</comment>
<proteinExistence type="inferred from homology"/>
<accession>A1UQX3</accession>
<protein>
    <recommendedName>
        <fullName evidence="1">3-dehydroquinate synthase</fullName>
        <shortName evidence="1">DHQS</shortName>
        <ecNumber evidence="1">4.2.3.4</ecNumber>
    </recommendedName>
</protein>
<reference key="1">
    <citation type="submission" date="2006-12" db="EMBL/GenBank/DDBJ databases">
        <authorList>
            <person name="Hendrix L."/>
            <person name="Mohamoud Y."/>
            <person name="Radune D."/>
            <person name="Shvartsbeyn A."/>
            <person name="Daugherty S."/>
            <person name="Dodson R."/>
            <person name="Durkin A.S."/>
            <person name="Harkins D."/>
            <person name="Huot H."/>
            <person name="Kothari S.P."/>
            <person name="Madupu R."/>
            <person name="Li J."/>
            <person name="Nelson W.C."/>
            <person name="Shrivastava S."/>
            <person name="Giglio M.G."/>
            <person name="Haft D."/>
            <person name="Selengut J."/>
            <person name="Fraser-Ligget C."/>
            <person name="Seshadri R."/>
        </authorList>
    </citation>
    <scope>NUCLEOTIDE SEQUENCE [LARGE SCALE GENOMIC DNA]</scope>
    <source>
        <strain>ATCC 35685 / KC583 / Herrer 020/F12,63</strain>
    </source>
</reference>
<keyword id="KW-0028">Amino-acid biosynthesis</keyword>
<keyword id="KW-0057">Aromatic amino acid biosynthesis</keyword>
<keyword id="KW-0170">Cobalt</keyword>
<keyword id="KW-0963">Cytoplasm</keyword>
<keyword id="KW-0456">Lyase</keyword>
<keyword id="KW-0479">Metal-binding</keyword>
<keyword id="KW-0520">NAD</keyword>
<keyword id="KW-0547">Nucleotide-binding</keyword>
<keyword id="KW-0862">Zinc</keyword>
<feature type="chain" id="PRO_1000094460" description="3-dehydroquinate synthase">
    <location>
        <begin position="1"/>
        <end position="377"/>
    </location>
</feature>
<feature type="binding site" evidence="1">
    <location>
        <begin position="113"/>
        <end position="117"/>
    </location>
    <ligand>
        <name>NAD(+)</name>
        <dbReference type="ChEBI" id="CHEBI:57540"/>
    </ligand>
</feature>
<feature type="binding site" evidence="1">
    <location>
        <begin position="137"/>
        <end position="138"/>
    </location>
    <ligand>
        <name>NAD(+)</name>
        <dbReference type="ChEBI" id="CHEBI:57540"/>
    </ligand>
</feature>
<feature type="binding site" evidence="1">
    <location>
        <position position="150"/>
    </location>
    <ligand>
        <name>NAD(+)</name>
        <dbReference type="ChEBI" id="CHEBI:57540"/>
    </ligand>
</feature>
<feature type="binding site" evidence="1">
    <location>
        <position position="159"/>
    </location>
    <ligand>
        <name>NAD(+)</name>
        <dbReference type="ChEBI" id="CHEBI:57540"/>
    </ligand>
</feature>
<feature type="binding site" evidence="1">
    <location>
        <position position="192"/>
    </location>
    <ligand>
        <name>Zn(2+)</name>
        <dbReference type="ChEBI" id="CHEBI:29105"/>
    </ligand>
</feature>
<feature type="binding site" evidence="1">
    <location>
        <position position="254"/>
    </location>
    <ligand>
        <name>Zn(2+)</name>
        <dbReference type="ChEBI" id="CHEBI:29105"/>
    </ligand>
</feature>
<feature type="binding site" evidence="1">
    <location>
        <position position="273"/>
    </location>
    <ligand>
        <name>Zn(2+)</name>
        <dbReference type="ChEBI" id="CHEBI:29105"/>
    </ligand>
</feature>